<keyword id="KW-0067">ATP-binding</keyword>
<keyword id="KW-0436">Ligase</keyword>
<keyword id="KW-0547">Nucleotide-binding</keyword>
<keyword id="KW-0658">Purine biosynthesis</keyword>
<keyword id="KW-1185">Reference proteome</keyword>
<gene>
    <name evidence="1" type="primary">purK</name>
    <name type="ordered locus">SSP1725</name>
</gene>
<dbReference type="EC" id="6.3.4.18" evidence="1"/>
<dbReference type="EMBL" id="AP008934">
    <property type="protein sequence ID" value="BAE18870.1"/>
    <property type="molecule type" value="Genomic_DNA"/>
</dbReference>
<dbReference type="RefSeq" id="WP_011303440.1">
    <property type="nucleotide sequence ID" value="NZ_MTGA01000039.1"/>
</dbReference>
<dbReference type="SMR" id="Q49WI9"/>
<dbReference type="GeneID" id="3616634"/>
<dbReference type="KEGG" id="ssp:SSP1725"/>
<dbReference type="PATRIC" id="fig|342451.11.peg.1724"/>
<dbReference type="eggNOG" id="COG0026">
    <property type="taxonomic scope" value="Bacteria"/>
</dbReference>
<dbReference type="HOGENOM" id="CLU_011534_0_1_9"/>
<dbReference type="OrthoDB" id="9804625at2"/>
<dbReference type="UniPathway" id="UPA00074">
    <property type="reaction ID" value="UER00942"/>
</dbReference>
<dbReference type="Proteomes" id="UP000006371">
    <property type="component" value="Chromosome"/>
</dbReference>
<dbReference type="GO" id="GO:0005829">
    <property type="term" value="C:cytosol"/>
    <property type="evidence" value="ECO:0007669"/>
    <property type="project" value="TreeGrafter"/>
</dbReference>
<dbReference type="GO" id="GO:0034028">
    <property type="term" value="F:5-(carboxyamino)imidazole ribonucleotide synthase activity"/>
    <property type="evidence" value="ECO:0007669"/>
    <property type="project" value="UniProtKB-UniRule"/>
</dbReference>
<dbReference type="GO" id="GO:0005524">
    <property type="term" value="F:ATP binding"/>
    <property type="evidence" value="ECO:0007669"/>
    <property type="project" value="UniProtKB-KW"/>
</dbReference>
<dbReference type="GO" id="GO:0046872">
    <property type="term" value="F:metal ion binding"/>
    <property type="evidence" value="ECO:0007669"/>
    <property type="project" value="InterPro"/>
</dbReference>
<dbReference type="GO" id="GO:0004638">
    <property type="term" value="F:phosphoribosylaminoimidazole carboxylase activity"/>
    <property type="evidence" value="ECO:0007669"/>
    <property type="project" value="InterPro"/>
</dbReference>
<dbReference type="GO" id="GO:0006189">
    <property type="term" value="P:'de novo' IMP biosynthetic process"/>
    <property type="evidence" value="ECO:0007669"/>
    <property type="project" value="UniProtKB-UniRule"/>
</dbReference>
<dbReference type="Gene3D" id="3.40.50.20">
    <property type="match status" value="1"/>
</dbReference>
<dbReference type="Gene3D" id="3.30.1490.20">
    <property type="entry name" value="ATP-grasp fold, A domain"/>
    <property type="match status" value="1"/>
</dbReference>
<dbReference type="Gene3D" id="3.30.470.20">
    <property type="entry name" value="ATP-grasp fold, B domain"/>
    <property type="match status" value="1"/>
</dbReference>
<dbReference type="HAMAP" id="MF_01928">
    <property type="entry name" value="PurK"/>
    <property type="match status" value="1"/>
</dbReference>
<dbReference type="InterPro" id="IPR011761">
    <property type="entry name" value="ATP-grasp"/>
</dbReference>
<dbReference type="InterPro" id="IPR003135">
    <property type="entry name" value="ATP-grasp_carboxylate-amine"/>
</dbReference>
<dbReference type="InterPro" id="IPR013815">
    <property type="entry name" value="ATP_grasp_subdomain_1"/>
</dbReference>
<dbReference type="InterPro" id="IPR016185">
    <property type="entry name" value="PreATP-grasp_dom_sf"/>
</dbReference>
<dbReference type="InterPro" id="IPR005875">
    <property type="entry name" value="PurK"/>
</dbReference>
<dbReference type="InterPro" id="IPR040686">
    <property type="entry name" value="PurK_C"/>
</dbReference>
<dbReference type="InterPro" id="IPR054350">
    <property type="entry name" value="PurT/PurK_preATP-grasp"/>
</dbReference>
<dbReference type="InterPro" id="IPR011054">
    <property type="entry name" value="Rudment_hybrid_motif"/>
</dbReference>
<dbReference type="NCBIfam" id="NF004675">
    <property type="entry name" value="PRK06019.1-1"/>
    <property type="match status" value="1"/>
</dbReference>
<dbReference type="NCBIfam" id="NF004676">
    <property type="entry name" value="PRK06019.1-2"/>
    <property type="match status" value="1"/>
</dbReference>
<dbReference type="NCBIfam" id="NF004679">
    <property type="entry name" value="PRK06019.1-5"/>
    <property type="match status" value="1"/>
</dbReference>
<dbReference type="NCBIfam" id="TIGR01161">
    <property type="entry name" value="purK"/>
    <property type="match status" value="1"/>
</dbReference>
<dbReference type="PANTHER" id="PTHR11609:SF5">
    <property type="entry name" value="PHOSPHORIBOSYLAMINOIMIDAZOLE CARBOXYLASE"/>
    <property type="match status" value="1"/>
</dbReference>
<dbReference type="PANTHER" id="PTHR11609">
    <property type="entry name" value="PURINE BIOSYNTHESIS PROTEIN 6/7, PUR6/7"/>
    <property type="match status" value="1"/>
</dbReference>
<dbReference type="Pfam" id="PF02222">
    <property type="entry name" value="ATP-grasp"/>
    <property type="match status" value="1"/>
</dbReference>
<dbReference type="Pfam" id="PF17769">
    <property type="entry name" value="PurK_C"/>
    <property type="match status" value="1"/>
</dbReference>
<dbReference type="Pfam" id="PF22660">
    <property type="entry name" value="RS_preATP-grasp-like"/>
    <property type="match status" value="1"/>
</dbReference>
<dbReference type="SUPFAM" id="SSF56059">
    <property type="entry name" value="Glutathione synthetase ATP-binding domain-like"/>
    <property type="match status" value="1"/>
</dbReference>
<dbReference type="SUPFAM" id="SSF52440">
    <property type="entry name" value="PreATP-grasp domain"/>
    <property type="match status" value="1"/>
</dbReference>
<dbReference type="SUPFAM" id="SSF51246">
    <property type="entry name" value="Rudiment single hybrid motif"/>
    <property type="match status" value="1"/>
</dbReference>
<dbReference type="PROSITE" id="PS50975">
    <property type="entry name" value="ATP_GRASP"/>
    <property type="match status" value="1"/>
</dbReference>
<sequence length="375" mass="42476">MNLSKLKFGSTIGIIGGGQLGKMMAQSAQQMGYKVIVLDPNSSCPCQYVANEFINAAYDDQIALDRLGALSDVITYEFENISANQLQALASKYNIPQGYQAIQLLQDRLTEKQTLQDSGSNIAPFLQLTDYDDLVKAVDSIGYPFIVKTRFGGYDGKGQVLVKDATHLDEARQLIQAQECVAEQYLNLSKEVSLTVTIGTNNQITYFPLQENEHQNQILFKTIVPARVQDNKEQEARNEVNKIIKAIHFIGTFTVEFFIDQQNQLYVNEIAPRPHNSGHYSIEACEYSQFDTHIKAITGQQLPQQVTLLKPAIMMNLLGRDLDLLEDQFAEHPEWHVHIYGKNERKFNRKMGHLTVLTNDINETEQKLLKQFEGR</sequence>
<organism>
    <name type="scientific">Staphylococcus saprophyticus subsp. saprophyticus (strain ATCC 15305 / DSM 20229 / NCIMB 8711 / NCTC 7292 / S-41)</name>
    <dbReference type="NCBI Taxonomy" id="342451"/>
    <lineage>
        <taxon>Bacteria</taxon>
        <taxon>Bacillati</taxon>
        <taxon>Bacillota</taxon>
        <taxon>Bacilli</taxon>
        <taxon>Bacillales</taxon>
        <taxon>Staphylococcaceae</taxon>
        <taxon>Staphylococcus</taxon>
    </lineage>
</organism>
<feature type="chain" id="PRO_0000075012" description="N5-carboxyaminoimidazole ribonucleotide synthase">
    <location>
        <begin position="1"/>
        <end position="375"/>
    </location>
</feature>
<feature type="domain" description="ATP-grasp" evidence="1">
    <location>
        <begin position="112"/>
        <end position="298"/>
    </location>
</feature>
<feature type="binding site" evidence="1">
    <location>
        <position position="108"/>
    </location>
    <ligand>
        <name>ATP</name>
        <dbReference type="ChEBI" id="CHEBI:30616"/>
    </ligand>
</feature>
<feature type="binding site" evidence="1">
    <location>
        <position position="148"/>
    </location>
    <ligand>
        <name>ATP</name>
        <dbReference type="ChEBI" id="CHEBI:30616"/>
    </ligand>
</feature>
<feature type="binding site" evidence="1">
    <location>
        <begin position="153"/>
        <end position="159"/>
    </location>
    <ligand>
        <name>ATP</name>
        <dbReference type="ChEBI" id="CHEBI:30616"/>
    </ligand>
</feature>
<feature type="binding site" evidence="1">
    <location>
        <begin position="183"/>
        <end position="186"/>
    </location>
    <ligand>
        <name>ATP</name>
        <dbReference type="ChEBI" id="CHEBI:30616"/>
    </ligand>
</feature>
<feature type="binding site" evidence="1">
    <location>
        <position position="191"/>
    </location>
    <ligand>
        <name>ATP</name>
        <dbReference type="ChEBI" id="CHEBI:30616"/>
    </ligand>
</feature>
<feature type="binding site" evidence="1">
    <location>
        <position position="214"/>
    </location>
    <ligand>
        <name>ATP</name>
        <dbReference type="ChEBI" id="CHEBI:30616"/>
    </ligand>
</feature>
<feature type="binding site" evidence="1">
    <location>
        <begin position="268"/>
        <end position="269"/>
    </location>
    <ligand>
        <name>ATP</name>
        <dbReference type="ChEBI" id="CHEBI:30616"/>
    </ligand>
</feature>
<proteinExistence type="inferred from homology"/>
<reference key="1">
    <citation type="journal article" date="2005" name="Proc. Natl. Acad. Sci. U.S.A.">
        <title>Whole genome sequence of Staphylococcus saprophyticus reveals the pathogenesis of uncomplicated urinary tract infection.</title>
        <authorList>
            <person name="Kuroda M."/>
            <person name="Yamashita A."/>
            <person name="Hirakawa H."/>
            <person name="Kumano M."/>
            <person name="Morikawa K."/>
            <person name="Higashide M."/>
            <person name="Maruyama A."/>
            <person name="Inose Y."/>
            <person name="Matoba K."/>
            <person name="Toh H."/>
            <person name="Kuhara S."/>
            <person name="Hattori M."/>
            <person name="Ohta T."/>
        </authorList>
    </citation>
    <scope>NUCLEOTIDE SEQUENCE [LARGE SCALE GENOMIC DNA]</scope>
    <source>
        <strain>ATCC 15305 / DSM 20229 / NCIMB 8711 / NCTC 7292 / S-41</strain>
    </source>
</reference>
<name>PURK_STAS1</name>
<accession>Q49WI9</accession>
<comment type="function">
    <text evidence="1">Catalyzes the ATP-dependent conversion of 5-aminoimidazole ribonucleotide (AIR) and HCO(3)(-) to N5-carboxyaminoimidazole ribonucleotide (N5-CAIR).</text>
</comment>
<comment type="catalytic activity">
    <reaction evidence="1">
        <text>5-amino-1-(5-phospho-beta-D-ribosyl)imidazole + hydrogencarbonate + ATP = 5-carboxyamino-1-(5-phospho-D-ribosyl)imidazole + ADP + phosphate + 2 H(+)</text>
        <dbReference type="Rhea" id="RHEA:19317"/>
        <dbReference type="ChEBI" id="CHEBI:15378"/>
        <dbReference type="ChEBI" id="CHEBI:17544"/>
        <dbReference type="ChEBI" id="CHEBI:30616"/>
        <dbReference type="ChEBI" id="CHEBI:43474"/>
        <dbReference type="ChEBI" id="CHEBI:58730"/>
        <dbReference type="ChEBI" id="CHEBI:137981"/>
        <dbReference type="ChEBI" id="CHEBI:456216"/>
        <dbReference type="EC" id="6.3.4.18"/>
    </reaction>
</comment>
<comment type="pathway">
    <text evidence="1">Purine metabolism; IMP biosynthesis via de novo pathway; 5-amino-1-(5-phospho-D-ribosyl)imidazole-4-carboxylate from 5-amino-1-(5-phospho-D-ribosyl)imidazole (N5-CAIR route): step 1/2.</text>
</comment>
<comment type="subunit">
    <text evidence="1">Homodimer.</text>
</comment>
<comment type="similarity">
    <text evidence="1">Belongs to the PurK/PurT family.</text>
</comment>
<evidence type="ECO:0000255" key="1">
    <source>
        <dbReference type="HAMAP-Rule" id="MF_01928"/>
    </source>
</evidence>
<protein>
    <recommendedName>
        <fullName evidence="1">N5-carboxyaminoimidazole ribonucleotide synthase</fullName>
        <shortName evidence="1">N5-CAIR synthase</shortName>
        <ecNumber evidence="1">6.3.4.18</ecNumber>
    </recommendedName>
    <alternativeName>
        <fullName evidence="1">5-(carboxyamino)imidazole ribonucleotide synthetase</fullName>
    </alternativeName>
</protein>